<reference key="1">
    <citation type="journal article" date="1999" name="J. Cell Biol.">
        <title>The maize tha4 gene functions in sec-independent protein transport in chloroplasts and is related to hcf106, tatA, and tatB.</title>
        <authorList>
            <person name="Walker M.B."/>
            <person name="Roy L.M."/>
            <person name="Coleman E."/>
            <person name="Voelker R."/>
            <person name="Barkan A."/>
        </authorList>
    </citation>
    <scope>NUCLEOTIDE SEQUENCE [MRNA]</scope>
    <scope>FUNCTION</scope>
    <scope>SUBCELLULAR LOCATION</scope>
    <scope>TOPOLOGY</scope>
    <scope>TISSUE SPECIFICITY</scope>
    <scope>DISRUPTION PHENOTYPE</scope>
    <source>
        <strain>cv. B73 Inbred</strain>
    </source>
</reference>
<reference key="2">
    <citation type="journal article" date="2009" name="Science">
        <title>The B73 maize genome: complexity, diversity, and dynamics.</title>
        <authorList>
            <person name="Schnable P.S."/>
            <person name="Ware D."/>
            <person name="Fulton R.S."/>
            <person name="Stein J.C."/>
            <person name="Wei F."/>
            <person name="Pasternak S."/>
            <person name="Liang C."/>
            <person name="Zhang J."/>
            <person name="Fulton L."/>
            <person name="Graves T.A."/>
            <person name="Minx P."/>
            <person name="Reily A.D."/>
            <person name="Courtney L."/>
            <person name="Kruchowski S.S."/>
            <person name="Tomlinson C."/>
            <person name="Strong C."/>
            <person name="Delehaunty K."/>
            <person name="Fronick C."/>
            <person name="Courtney B."/>
            <person name="Rock S.M."/>
            <person name="Belter E."/>
            <person name="Du F."/>
            <person name="Kim K."/>
            <person name="Abbott R.M."/>
            <person name="Cotton M."/>
            <person name="Levy A."/>
            <person name="Marchetto P."/>
            <person name="Ochoa K."/>
            <person name="Jackson S.M."/>
            <person name="Gillam B."/>
            <person name="Chen W."/>
            <person name="Yan L."/>
            <person name="Higginbotham J."/>
            <person name="Cardenas M."/>
            <person name="Waligorski J."/>
            <person name="Applebaum E."/>
            <person name="Phelps L."/>
            <person name="Falcone J."/>
            <person name="Kanchi K."/>
            <person name="Thane T."/>
            <person name="Scimone A."/>
            <person name="Thane N."/>
            <person name="Henke J."/>
            <person name="Wang T."/>
            <person name="Ruppert J."/>
            <person name="Shah N."/>
            <person name="Rotter K."/>
            <person name="Hodges J."/>
            <person name="Ingenthron E."/>
            <person name="Cordes M."/>
            <person name="Kohlberg S."/>
            <person name="Sgro J."/>
            <person name="Delgado B."/>
            <person name="Mead K."/>
            <person name="Chinwalla A."/>
            <person name="Leonard S."/>
            <person name="Crouse K."/>
            <person name="Collura K."/>
            <person name="Kudrna D."/>
            <person name="Currie J."/>
            <person name="He R."/>
            <person name="Angelova A."/>
            <person name="Rajasekar S."/>
            <person name="Mueller T."/>
            <person name="Lomeli R."/>
            <person name="Scara G."/>
            <person name="Ko A."/>
            <person name="Delaney K."/>
            <person name="Wissotski M."/>
            <person name="Lopez G."/>
            <person name="Campos D."/>
            <person name="Braidotti M."/>
            <person name="Ashley E."/>
            <person name="Golser W."/>
            <person name="Kim H."/>
            <person name="Lee S."/>
            <person name="Lin J."/>
            <person name="Dujmic Z."/>
            <person name="Kim W."/>
            <person name="Talag J."/>
            <person name="Zuccolo A."/>
            <person name="Fan C."/>
            <person name="Sebastian A."/>
            <person name="Kramer M."/>
            <person name="Spiegel L."/>
            <person name="Nascimento L."/>
            <person name="Zutavern T."/>
            <person name="Miller B."/>
            <person name="Ambroise C."/>
            <person name="Muller S."/>
            <person name="Spooner W."/>
            <person name="Narechania A."/>
            <person name="Ren L."/>
            <person name="Wei S."/>
            <person name="Kumari S."/>
            <person name="Faga B."/>
            <person name="Levy M.J."/>
            <person name="McMahan L."/>
            <person name="Van Buren P."/>
            <person name="Vaughn M.W."/>
            <person name="Ying K."/>
            <person name="Yeh C.-T."/>
            <person name="Emrich S.J."/>
            <person name="Jia Y."/>
            <person name="Kalyanaraman A."/>
            <person name="Hsia A.-P."/>
            <person name="Barbazuk W.B."/>
            <person name="Baucom R.S."/>
            <person name="Brutnell T.P."/>
            <person name="Carpita N.C."/>
            <person name="Chaparro C."/>
            <person name="Chia J.-M."/>
            <person name="Deragon J.-M."/>
            <person name="Estill J.C."/>
            <person name="Fu Y."/>
            <person name="Jeddeloh J.A."/>
            <person name="Han Y."/>
            <person name="Lee H."/>
            <person name="Li P."/>
            <person name="Lisch D.R."/>
            <person name="Liu S."/>
            <person name="Liu Z."/>
            <person name="Nagel D.H."/>
            <person name="McCann M.C."/>
            <person name="SanMiguel P."/>
            <person name="Myers A.M."/>
            <person name="Nettleton D."/>
            <person name="Nguyen J."/>
            <person name="Penning B.W."/>
            <person name="Ponnala L."/>
            <person name="Schneider K.L."/>
            <person name="Schwartz D.C."/>
            <person name="Sharma A."/>
            <person name="Soderlund C."/>
            <person name="Springer N.M."/>
            <person name="Sun Q."/>
            <person name="Wang H."/>
            <person name="Waterman M."/>
            <person name="Westerman R."/>
            <person name="Wolfgruber T.K."/>
            <person name="Yang L."/>
            <person name="Yu Y."/>
            <person name="Zhang L."/>
            <person name="Zhou S."/>
            <person name="Zhu Q."/>
            <person name="Bennetzen J.L."/>
            <person name="Dawe R.K."/>
            <person name="Jiang J."/>
            <person name="Jiang N."/>
            <person name="Presting G.G."/>
            <person name="Wessler S.R."/>
            <person name="Aluru S."/>
            <person name="Martienssen R.A."/>
            <person name="Clifton S.W."/>
            <person name="McCombie W.R."/>
            <person name="Wing R.A."/>
            <person name="Wilson R.K."/>
        </authorList>
    </citation>
    <scope>NUCLEOTIDE SEQUENCE [LARGE SCALE GENOMIC DNA]</scope>
    <source>
        <strain>cv. B73</strain>
    </source>
</reference>
<reference key="3">
    <citation type="journal article" date="2009" name="Plant Mol. Biol.">
        <title>Insights into corn genes derived from large-scale cDNA sequencing.</title>
        <authorList>
            <person name="Alexandrov N.N."/>
            <person name="Brover V.V."/>
            <person name="Freidin S."/>
            <person name="Troukhan M.E."/>
            <person name="Tatarinova T.V."/>
            <person name="Zhang H."/>
            <person name="Swaller T.J."/>
            <person name="Lu Y.-P."/>
            <person name="Bouck J."/>
            <person name="Flavell R.B."/>
            <person name="Feldmann K.A."/>
        </authorList>
    </citation>
    <scope>NUCLEOTIDE SEQUENCE [LARGE SCALE MRNA]</scope>
</reference>
<reference key="4">
    <citation type="journal article" date="2009" name="PLoS Genet.">
        <title>Sequencing, mapping, and analysis of 27,455 maize full-length cDNAs.</title>
        <authorList>
            <person name="Soderlund C."/>
            <person name="Descour A."/>
            <person name="Kudrna D."/>
            <person name="Bomhoff M."/>
            <person name="Boyd L."/>
            <person name="Currie J."/>
            <person name="Angelova A."/>
            <person name="Collura K."/>
            <person name="Wissotski M."/>
            <person name="Ashley E."/>
            <person name="Morrow D."/>
            <person name="Fernandes J."/>
            <person name="Walbot V."/>
            <person name="Yu Y."/>
        </authorList>
    </citation>
    <scope>NUCLEOTIDE SEQUENCE [LARGE SCALE MRNA]</scope>
    <source>
        <strain>cv. B73</strain>
    </source>
</reference>
<reference key="5">
    <citation type="journal article" date="1995" name="EMBO J.">
        <title>Two nuclear mutations disrupt distinct pathways for targeting proteins to the chloroplast thylakoid.</title>
        <authorList>
            <person name="Voelker R."/>
            <person name="Barkan A."/>
        </authorList>
    </citation>
    <scope>DISRUPTION PHENOTYPE</scope>
</reference>
<feature type="transit peptide" description="Chloroplast" evidence="2">
    <location>
        <begin position="1"/>
        <end position="61"/>
    </location>
</feature>
<feature type="chain" id="PRO_0000419920" description="Sec-independent protein translocase protein TATA, chloroplastic">
    <location>
        <begin position="62"/>
        <end position="170"/>
    </location>
</feature>
<feature type="topological domain" description="Lumenal" evidence="2">
    <location>
        <begin position="62"/>
        <end position="84"/>
    </location>
</feature>
<feature type="transmembrane region" description="Helical" evidence="2">
    <location>
        <begin position="85"/>
        <end position="105"/>
    </location>
</feature>
<feature type="topological domain" description="Stromal" evidence="2">
    <location>
        <begin position="106"/>
        <end position="170"/>
    </location>
</feature>
<feature type="region of interest" description="Disordered" evidence="3">
    <location>
        <begin position="130"/>
        <end position="170"/>
    </location>
</feature>
<feature type="compositionally biased region" description="Basic and acidic residues" evidence="3">
    <location>
        <begin position="130"/>
        <end position="139"/>
    </location>
</feature>
<feature type="sequence conflict" description="In Ref. 1; AAD31522." ref="1">
    <original>A</original>
    <variation>G</variation>
    <location>
        <position position="26"/>
    </location>
</feature>
<feature type="sequence conflict" description="In Ref. 3; ACG39360." evidence="7" ref="3">
    <original>A</original>
    <variation>S</variation>
    <location>
        <position position="59"/>
    </location>
</feature>
<feature type="sequence conflict" description="In Ref. 3; ACG39360." evidence="7" ref="3">
    <original>E</original>
    <variation>D</variation>
    <location>
        <position position="158"/>
    </location>
</feature>
<comment type="function">
    <text evidence="4">Part of the twin-arginine translocation (Tat) system that transports large folded proteins containing a characteristic twin-arginine motif in their signal peptide across the thylakoid membrane. Involved in delta pH-dependent protein transport required for chloroplast development, especially thylakoid membrane formation. TATC and TATB mediate precursor recognition, whereas TATA facilitates translocation.</text>
</comment>
<comment type="subunit">
    <text evidence="1">In thylakoid membranes, TATC and TATB form a large receptor complex, containing about eight TATC-TATB pairs, which binds the precursor protein. Twin arginine signal peptide promotes pH-triggered docking of TATA oligomers to TATC-TATB receptor complex, inducing a conformational switch of TATA that results in activation of the translocase. TATA dissociates from TATC-TATB upon completion of translocation (By similarity).</text>
</comment>
<comment type="subcellular location">
    <subcellularLocation>
        <location evidence="8">Plastid</location>
        <location evidence="8">Chloroplast thylakoid membrane</location>
        <topology evidence="8">Single-pass membrane protein</topology>
    </subcellularLocation>
    <text>The C-terminus is located in the stroma.</text>
</comment>
<comment type="disruption phenotype">
    <text evidence="4 5">Seedling lethality after the development of three to four leaves. Non-photosynthetic mutants possess near normal pigment levels but lack one or more elements of the electron transport activity in chloroplasts. Defects in protein targeting across chloroplast thylakoid membrane (PubMed:7664731).</text>
</comment>
<comment type="similarity">
    <text evidence="7">Belongs to the TatA/E family.</text>
</comment>
<protein>
    <recommendedName>
        <fullName evidence="7">Sec-independent protein translocase protein TATA, chloroplastic</fullName>
    </recommendedName>
    <alternativeName>
        <fullName evidence="6">Protein THYLAKOID ASSEMBLY 4</fullName>
    </alternativeName>
    <alternativeName>
        <fullName evidence="7">Protein TWIN-ARGININE TRANSLOCATION A</fullName>
    </alternativeName>
</protein>
<evidence type="ECO:0000250" key="1"/>
<evidence type="ECO:0000255" key="2"/>
<evidence type="ECO:0000256" key="3">
    <source>
        <dbReference type="SAM" id="MobiDB-lite"/>
    </source>
</evidence>
<evidence type="ECO:0000269" key="4">
    <source>
    </source>
</evidence>
<evidence type="ECO:0000269" key="5">
    <source>
    </source>
</evidence>
<evidence type="ECO:0000303" key="6">
    <source>
    </source>
</evidence>
<evidence type="ECO:0000305" key="7"/>
<evidence type="ECO:0000305" key="8">
    <source>
    </source>
</evidence>
<evidence type="ECO:0000312" key="9">
    <source>
        <dbReference type="EMBL" id="ONM07224.1"/>
    </source>
</evidence>
<keyword id="KW-0150">Chloroplast</keyword>
<keyword id="KW-0472">Membrane</keyword>
<keyword id="KW-0934">Plastid</keyword>
<keyword id="KW-0653">Protein transport</keyword>
<keyword id="KW-1185">Reference proteome</keyword>
<keyword id="KW-0793">Thylakoid</keyword>
<keyword id="KW-0809">Transit peptide</keyword>
<keyword id="KW-0811">Translocation</keyword>
<keyword id="KW-0812">Transmembrane</keyword>
<keyword id="KW-1133">Transmembrane helix</keyword>
<keyword id="KW-0813">Transport</keyword>
<gene>
    <name evidence="8" type="primary">TATA</name>
    <name evidence="6" type="synonym">THA4</name>
    <name evidence="9" type="ORF">ZEAMMB73_Zm00001d033317</name>
</gene>
<accession>Q9XFJ8</accession>
<accession>B6TQH7</accession>
<accession>C0PD76</accession>
<organism>
    <name type="scientific">Zea mays</name>
    <name type="common">Maize</name>
    <dbReference type="NCBI Taxonomy" id="4577"/>
    <lineage>
        <taxon>Eukaryota</taxon>
        <taxon>Viridiplantae</taxon>
        <taxon>Streptophyta</taxon>
        <taxon>Embryophyta</taxon>
        <taxon>Tracheophyta</taxon>
        <taxon>Spermatophyta</taxon>
        <taxon>Magnoliopsida</taxon>
        <taxon>Liliopsida</taxon>
        <taxon>Poales</taxon>
        <taxon>Poaceae</taxon>
        <taxon>PACMAD clade</taxon>
        <taxon>Panicoideae</taxon>
        <taxon>Andropogonodae</taxon>
        <taxon>Andropogoneae</taxon>
        <taxon>Tripsacinae</taxon>
        <taxon>Zea</taxon>
    </lineage>
</organism>
<name>TATA_MAIZE</name>
<sequence>MGIPVVVPVAAAYSCSSSLAAPPRAAAAAARAPSRAHVAAAGMSSRASSFVGGSGGDLAAVAASVAARPRRAGSGGGGALGCKCLFGLGVPELAVIAGVAALVFGPKQLPEIGRSIGKTVKSFQQAAKEFETELKKEPGEGGDQPPPATPTAVSGGEEKGLEASSSKESA</sequence>
<dbReference type="EMBL" id="AF145755">
    <property type="protein sequence ID" value="AAD31522.1"/>
    <property type="molecule type" value="mRNA"/>
</dbReference>
<dbReference type="EMBL" id="CM007647">
    <property type="protein sequence ID" value="ONM07224.1"/>
    <property type="molecule type" value="Genomic_DNA"/>
</dbReference>
<dbReference type="EMBL" id="EU967242">
    <property type="protein sequence ID" value="ACG39360.1"/>
    <property type="molecule type" value="mRNA"/>
</dbReference>
<dbReference type="EMBL" id="BT066245">
    <property type="protein sequence ID" value="ACN32121.1"/>
    <property type="molecule type" value="mRNA"/>
</dbReference>
<dbReference type="RefSeq" id="NP_001150512.2">
    <property type="nucleotide sequence ID" value="NM_001157040.2"/>
</dbReference>
<dbReference type="STRING" id="4577.Q9XFJ8"/>
<dbReference type="PaxDb" id="4577-GRMZM2G472651_P01"/>
<dbReference type="EnsemblPlants" id="Zm00001eb051040_T002">
    <property type="protein sequence ID" value="Zm00001eb051040_P002"/>
    <property type="gene ID" value="Zm00001eb051040"/>
</dbReference>
<dbReference type="GeneID" id="541788"/>
<dbReference type="Gramene" id="Zm00001eb051040_T002">
    <property type="protein sequence ID" value="Zm00001eb051040_P002"/>
    <property type="gene ID" value="Zm00001eb051040"/>
</dbReference>
<dbReference type="KEGG" id="zma:541788"/>
<dbReference type="MaizeGDB" id="1233219"/>
<dbReference type="eggNOG" id="ENOG502S4T0">
    <property type="taxonomic scope" value="Eukaryota"/>
</dbReference>
<dbReference type="InParanoid" id="Q9XFJ8"/>
<dbReference type="OMA" id="PPNEMAV"/>
<dbReference type="OrthoDB" id="1923722at2759"/>
<dbReference type="Proteomes" id="UP000007305">
    <property type="component" value="Chromosome 1"/>
</dbReference>
<dbReference type="ExpressionAtlas" id="Q9XFJ8">
    <property type="expression patterns" value="baseline and differential"/>
</dbReference>
<dbReference type="GO" id="GO:0009535">
    <property type="term" value="C:chloroplast thylakoid membrane"/>
    <property type="evidence" value="ECO:0000314"/>
    <property type="project" value="UniProtKB"/>
</dbReference>
<dbReference type="GO" id="GO:0042651">
    <property type="term" value="C:thylakoid membrane"/>
    <property type="evidence" value="ECO:0000314"/>
    <property type="project" value="UniProtKB"/>
</dbReference>
<dbReference type="GO" id="GO:0009977">
    <property type="term" value="F:proton motive force dependent protein transmembrane transporter activity"/>
    <property type="evidence" value="ECO:0000315"/>
    <property type="project" value="UniProtKB"/>
</dbReference>
<dbReference type="GO" id="GO:0045038">
    <property type="term" value="P:protein import into chloroplast thylakoid membrane"/>
    <property type="evidence" value="ECO:0000315"/>
    <property type="project" value="UniProtKB"/>
</dbReference>
<dbReference type="GO" id="GO:0043953">
    <property type="term" value="P:protein transport by the Tat complex"/>
    <property type="evidence" value="ECO:0000315"/>
    <property type="project" value="UniProtKB"/>
</dbReference>
<dbReference type="FunFam" id="1.20.5.3310:FF:000003">
    <property type="entry name" value="Sec-independent protein translocase protein TATB, chloroplastic"/>
    <property type="match status" value="1"/>
</dbReference>
<dbReference type="Gene3D" id="1.20.5.3310">
    <property type="match status" value="1"/>
</dbReference>
<dbReference type="HAMAP" id="MF_00236">
    <property type="entry name" value="TatA_E"/>
    <property type="match status" value="1"/>
</dbReference>
<dbReference type="InterPro" id="IPR003369">
    <property type="entry name" value="TatA/B/E"/>
</dbReference>
<dbReference type="InterPro" id="IPR006312">
    <property type="entry name" value="TatA/E"/>
</dbReference>
<dbReference type="NCBIfam" id="NF011429">
    <property type="entry name" value="PRK14857.1"/>
    <property type="match status" value="1"/>
</dbReference>
<dbReference type="NCBIfam" id="TIGR01411">
    <property type="entry name" value="tatAE"/>
    <property type="match status" value="1"/>
</dbReference>
<dbReference type="PANTHER" id="PTHR33162">
    <property type="entry name" value="SEC-INDEPENDENT PROTEIN TRANSLOCASE PROTEIN TATA, CHLOROPLASTIC"/>
    <property type="match status" value="1"/>
</dbReference>
<dbReference type="PANTHER" id="PTHR33162:SF1">
    <property type="entry name" value="SEC-INDEPENDENT PROTEIN TRANSLOCASE PROTEIN TATA, CHLOROPLASTIC"/>
    <property type="match status" value="1"/>
</dbReference>
<dbReference type="Pfam" id="PF02416">
    <property type="entry name" value="TatA_B_E"/>
    <property type="match status" value="1"/>
</dbReference>
<proteinExistence type="evidence at protein level"/>